<comment type="catalytic activity">
    <reaction evidence="1">
        <text>2-(N(omega)-L-arginino)succinate = fumarate + L-arginine</text>
        <dbReference type="Rhea" id="RHEA:24020"/>
        <dbReference type="ChEBI" id="CHEBI:29806"/>
        <dbReference type="ChEBI" id="CHEBI:32682"/>
        <dbReference type="ChEBI" id="CHEBI:57472"/>
        <dbReference type="EC" id="4.3.2.1"/>
    </reaction>
</comment>
<comment type="pathway">
    <text evidence="1">Amino-acid biosynthesis; L-arginine biosynthesis; L-arginine from L-ornithine and carbamoyl phosphate: step 3/3.</text>
</comment>
<comment type="subcellular location">
    <subcellularLocation>
        <location evidence="1">Cytoplasm</location>
    </subcellularLocation>
</comment>
<comment type="similarity">
    <text evidence="1">Belongs to the lyase 1 family. Argininosuccinate lyase subfamily.</text>
</comment>
<dbReference type="EC" id="4.3.2.1" evidence="1"/>
<dbReference type="EMBL" id="CP000753">
    <property type="protein sequence ID" value="ABS10208.1"/>
    <property type="molecule type" value="Genomic_DNA"/>
</dbReference>
<dbReference type="RefSeq" id="WP_012090487.1">
    <property type="nucleotide sequence ID" value="NC_009665.1"/>
</dbReference>
<dbReference type="SMR" id="A6WTR9"/>
<dbReference type="KEGG" id="sbm:Shew185_4091"/>
<dbReference type="HOGENOM" id="CLU_027272_2_3_6"/>
<dbReference type="UniPathway" id="UPA00068">
    <property type="reaction ID" value="UER00114"/>
</dbReference>
<dbReference type="GO" id="GO:0005829">
    <property type="term" value="C:cytosol"/>
    <property type="evidence" value="ECO:0007669"/>
    <property type="project" value="TreeGrafter"/>
</dbReference>
<dbReference type="GO" id="GO:0004056">
    <property type="term" value="F:argininosuccinate lyase activity"/>
    <property type="evidence" value="ECO:0007669"/>
    <property type="project" value="UniProtKB-UniRule"/>
</dbReference>
<dbReference type="GO" id="GO:0042450">
    <property type="term" value="P:arginine biosynthetic process via ornithine"/>
    <property type="evidence" value="ECO:0007669"/>
    <property type="project" value="InterPro"/>
</dbReference>
<dbReference type="GO" id="GO:0006526">
    <property type="term" value="P:L-arginine biosynthetic process"/>
    <property type="evidence" value="ECO:0007669"/>
    <property type="project" value="UniProtKB-UniRule"/>
</dbReference>
<dbReference type="CDD" id="cd01359">
    <property type="entry name" value="Argininosuccinate_lyase"/>
    <property type="match status" value="1"/>
</dbReference>
<dbReference type="FunFam" id="1.10.40.30:FF:000001">
    <property type="entry name" value="Argininosuccinate lyase"/>
    <property type="match status" value="1"/>
</dbReference>
<dbReference type="FunFam" id="1.20.200.10:FF:000006">
    <property type="entry name" value="Argininosuccinate lyase"/>
    <property type="match status" value="1"/>
</dbReference>
<dbReference type="Gene3D" id="1.10.40.30">
    <property type="entry name" value="Fumarase/aspartase (C-terminal domain)"/>
    <property type="match status" value="1"/>
</dbReference>
<dbReference type="Gene3D" id="1.20.200.10">
    <property type="entry name" value="Fumarase/aspartase (Central domain)"/>
    <property type="match status" value="1"/>
</dbReference>
<dbReference type="Gene3D" id="1.10.275.10">
    <property type="entry name" value="Fumarase/aspartase (N-terminal domain)"/>
    <property type="match status" value="1"/>
</dbReference>
<dbReference type="HAMAP" id="MF_00006">
    <property type="entry name" value="Arg_succ_lyase"/>
    <property type="match status" value="1"/>
</dbReference>
<dbReference type="InterPro" id="IPR029419">
    <property type="entry name" value="Arg_succ_lyase_C"/>
</dbReference>
<dbReference type="InterPro" id="IPR009049">
    <property type="entry name" value="Argininosuccinate_lyase"/>
</dbReference>
<dbReference type="InterPro" id="IPR024083">
    <property type="entry name" value="Fumarase/histidase_N"/>
</dbReference>
<dbReference type="InterPro" id="IPR020557">
    <property type="entry name" value="Fumarate_lyase_CS"/>
</dbReference>
<dbReference type="InterPro" id="IPR000362">
    <property type="entry name" value="Fumarate_lyase_fam"/>
</dbReference>
<dbReference type="InterPro" id="IPR022761">
    <property type="entry name" value="Fumarate_lyase_N"/>
</dbReference>
<dbReference type="InterPro" id="IPR008948">
    <property type="entry name" value="L-Aspartase-like"/>
</dbReference>
<dbReference type="NCBIfam" id="TIGR00838">
    <property type="entry name" value="argH"/>
    <property type="match status" value="1"/>
</dbReference>
<dbReference type="NCBIfam" id="NF008964">
    <property type="entry name" value="PRK12308.1"/>
    <property type="match status" value="1"/>
</dbReference>
<dbReference type="PANTHER" id="PTHR43814">
    <property type="entry name" value="ARGININOSUCCINATE LYASE"/>
    <property type="match status" value="1"/>
</dbReference>
<dbReference type="PANTHER" id="PTHR43814:SF1">
    <property type="entry name" value="ARGININOSUCCINATE LYASE"/>
    <property type="match status" value="1"/>
</dbReference>
<dbReference type="Pfam" id="PF14698">
    <property type="entry name" value="ASL_C2"/>
    <property type="match status" value="1"/>
</dbReference>
<dbReference type="Pfam" id="PF00206">
    <property type="entry name" value="Lyase_1"/>
    <property type="match status" value="1"/>
</dbReference>
<dbReference type="PRINTS" id="PR00145">
    <property type="entry name" value="ARGSUCLYASE"/>
</dbReference>
<dbReference type="PRINTS" id="PR00149">
    <property type="entry name" value="FUMRATELYASE"/>
</dbReference>
<dbReference type="SUPFAM" id="SSF48557">
    <property type="entry name" value="L-aspartase-like"/>
    <property type="match status" value="1"/>
</dbReference>
<dbReference type="PROSITE" id="PS00163">
    <property type="entry name" value="FUMARATE_LYASES"/>
    <property type="match status" value="1"/>
</dbReference>
<feature type="chain" id="PRO_1000000536" description="Argininosuccinate lyase">
    <location>
        <begin position="1"/>
        <end position="455"/>
    </location>
</feature>
<protein>
    <recommendedName>
        <fullName evidence="1">Argininosuccinate lyase</fullName>
        <shortName evidence="1">ASAL</shortName>
        <ecNumber evidence="1">4.3.2.1</ecNumber>
    </recommendedName>
    <alternativeName>
        <fullName evidence="1">Arginosuccinase</fullName>
    </alternativeName>
</protein>
<keyword id="KW-0028">Amino-acid biosynthesis</keyword>
<keyword id="KW-0055">Arginine biosynthesis</keyword>
<keyword id="KW-0963">Cytoplasm</keyword>
<keyword id="KW-0456">Lyase</keyword>
<sequence length="455" mass="49123">MALWGGRFQGETSALFKLFNDSLPVDYRLFEQDVVGSIAWADAIASVGIITATECSDLKKALNDLLVEVNGDPAIILASGAEDIHSFVESALIAKVGDLGKKLHTGRSRNDQVATDLKLWCQSEGAALLARLHSLHAELLALAEREFDAVMPGYTHLQRAQPVTFGHWCLAYVEMYERDISRLADALTRANTCPLGSGALAGTAYKMDRHALAAALNFAAPTLNSLDSVSDRDHVVELCSTASISMMHLSRMAEDLIFFNSGEANFISLSDEVTSGSSLMPQKKNPDALELIRGKTGRVYGSLVGILTTMKALPLAYNKDMQEDKEGLFDVVDSWAICLDMAALVLSGLKVNRPNALLAAQQGYANSTELADYLVSKGMPFREAHHVVGEVVVAAIAKQIPLEDFSLAELKTFAAIIEDDVYPNLTIEACLAKRDVLGGTALPQIQQAIAAKKAR</sequence>
<name>ARLY_SHEB8</name>
<proteinExistence type="inferred from homology"/>
<evidence type="ECO:0000255" key="1">
    <source>
        <dbReference type="HAMAP-Rule" id="MF_00006"/>
    </source>
</evidence>
<reference key="1">
    <citation type="submission" date="2007-07" db="EMBL/GenBank/DDBJ databases">
        <title>Complete sequence of chromosome of Shewanella baltica OS185.</title>
        <authorList>
            <consortium name="US DOE Joint Genome Institute"/>
            <person name="Copeland A."/>
            <person name="Lucas S."/>
            <person name="Lapidus A."/>
            <person name="Barry K."/>
            <person name="Glavina del Rio T."/>
            <person name="Dalin E."/>
            <person name="Tice H."/>
            <person name="Pitluck S."/>
            <person name="Sims D."/>
            <person name="Brettin T."/>
            <person name="Bruce D."/>
            <person name="Detter J.C."/>
            <person name="Han C."/>
            <person name="Schmutz J."/>
            <person name="Larimer F."/>
            <person name="Land M."/>
            <person name="Hauser L."/>
            <person name="Kyrpides N."/>
            <person name="Mikhailova N."/>
            <person name="Brettar I."/>
            <person name="Rodrigues J."/>
            <person name="Konstantinidis K."/>
            <person name="Tiedje J."/>
            <person name="Richardson P."/>
        </authorList>
    </citation>
    <scope>NUCLEOTIDE SEQUENCE [LARGE SCALE GENOMIC DNA]</scope>
    <source>
        <strain>OS185</strain>
    </source>
</reference>
<accession>A6WTR9</accession>
<gene>
    <name evidence="1" type="primary">argH</name>
    <name type="ordered locus">Shew185_4091</name>
</gene>
<organism>
    <name type="scientific">Shewanella baltica (strain OS185)</name>
    <dbReference type="NCBI Taxonomy" id="402882"/>
    <lineage>
        <taxon>Bacteria</taxon>
        <taxon>Pseudomonadati</taxon>
        <taxon>Pseudomonadota</taxon>
        <taxon>Gammaproteobacteria</taxon>
        <taxon>Alteromonadales</taxon>
        <taxon>Shewanellaceae</taxon>
        <taxon>Shewanella</taxon>
    </lineage>
</organism>